<name>YP197_YEAST</name>
<accession>Q08953</accession>
<comment type="miscellaneous">
    <text evidence="1">Almost completely overlaps RPL7B.</text>
</comment>
<comment type="caution">
    <text evidence="2">Product of a dubious gene prediction unlikely to encode a functional protein. Because of that it is not part of the S.cerevisiae S288c complete/reference proteome set.</text>
</comment>
<protein>
    <recommendedName>
        <fullName>Putative uncharacterized protein YPL197C</fullName>
    </recommendedName>
</protein>
<feature type="chain" id="PRO_0000299808" description="Putative uncharacterized protein YPL197C">
    <location>
        <begin position="1"/>
        <end position="137"/>
    </location>
</feature>
<evidence type="ECO:0000305" key="1"/>
<evidence type="ECO:0000305" key="2">
    <source>
    </source>
</evidence>
<sequence length="137" mass="15934">MKRNIIYYTLRLLPHGIMLVHSLNQFIDEFFTVTERTTLDEMLELSWDTPTTRWVGQLEWPQKVVSLLEVWTNSDDFVNQIVNGQDTILTQVGFDDSIVGQWNSLLVDLTETSLVDQLSNSRVGWVTVSNVWFNQLQ</sequence>
<reference key="1">
    <citation type="journal article" date="1997" name="Nature">
        <title>The nucleotide sequence of Saccharomyces cerevisiae chromosome XVI.</title>
        <authorList>
            <person name="Bussey H."/>
            <person name="Storms R.K."/>
            <person name="Ahmed A."/>
            <person name="Albermann K."/>
            <person name="Allen E."/>
            <person name="Ansorge W."/>
            <person name="Araujo R."/>
            <person name="Aparicio A."/>
            <person name="Barrell B.G."/>
            <person name="Badcock K."/>
            <person name="Benes V."/>
            <person name="Botstein D."/>
            <person name="Bowman S."/>
            <person name="Brueckner M."/>
            <person name="Carpenter J."/>
            <person name="Cherry J.M."/>
            <person name="Chung E."/>
            <person name="Churcher C.M."/>
            <person name="Coster F."/>
            <person name="Davis K."/>
            <person name="Davis R.W."/>
            <person name="Dietrich F.S."/>
            <person name="Delius H."/>
            <person name="DiPaolo T."/>
            <person name="Dubois E."/>
            <person name="Duesterhoeft A."/>
            <person name="Duncan M."/>
            <person name="Floeth M."/>
            <person name="Fortin N."/>
            <person name="Friesen J.D."/>
            <person name="Fritz C."/>
            <person name="Goffeau A."/>
            <person name="Hall J."/>
            <person name="Hebling U."/>
            <person name="Heumann K."/>
            <person name="Hilbert H."/>
            <person name="Hillier L.W."/>
            <person name="Hunicke-Smith S."/>
            <person name="Hyman R.W."/>
            <person name="Johnston M."/>
            <person name="Kalman S."/>
            <person name="Kleine K."/>
            <person name="Komp C."/>
            <person name="Kurdi O."/>
            <person name="Lashkari D."/>
            <person name="Lew H."/>
            <person name="Lin A."/>
            <person name="Lin D."/>
            <person name="Louis E.J."/>
            <person name="Marathe R."/>
            <person name="Messenguy F."/>
            <person name="Mewes H.-W."/>
            <person name="Mirtipati S."/>
            <person name="Moestl D."/>
            <person name="Mueller-Auer S."/>
            <person name="Namath A."/>
            <person name="Nentwich U."/>
            <person name="Oefner P."/>
            <person name="Pearson D."/>
            <person name="Petel F.X."/>
            <person name="Pohl T.M."/>
            <person name="Purnelle B."/>
            <person name="Rajandream M.A."/>
            <person name="Rechmann S."/>
            <person name="Rieger M."/>
            <person name="Riles L."/>
            <person name="Roberts D."/>
            <person name="Schaefer M."/>
            <person name="Scharfe M."/>
            <person name="Scherens B."/>
            <person name="Schramm S."/>
            <person name="Schroeder M."/>
            <person name="Sdicu A.-M."/>
            <person name="Tettelin H."/>
            <person name="Urrestarazu L.A."/>
            <person name="Ushinsky S."/>
            <person name="Vierendeels F."/>
            <person name="Vissers S."/>
            <person name="Voss H."/>
            <person name="Walsh S.V."/>
            <person name="Wambutt R."/>
            <person name="Wang Y."/>
            <person name="Wedler E."/>
            <person name="Wedler H."/>
            <person name="Winnett E."/>
            <person name="Zhong W.-W."/>
            <person name="Zollner A."/>
            <person name="Vo D.H."/>
            <person name="Hani J."/>
        </authorList>
    </citation>
    <scope>NUCLEOTIDE SEQUENCE [LARGE SCALE GENOMIC DNA]</scope>
    <source>
        <strain>ATCC 204508 / S288c</strain>
    </source>
</reference>
<reference key="2">
    <citation type="journal article" date="2014" name="G3 (Bethesda)">
        <title>The reference genome sequence of Saccharomyces cerevisiae: Then and now.</title>
        <authorList>
            <person name="Engel S.R."/>
            <person name="Dietrich F.S."/>
            <person name="Fisk D.G."/>
            <person name="Binkley G."/>
            <person name="Balakrishnan R."/>
            <person name="Costanzo M.C."/>
            <person name="Dwight S.S."/>
            <person name="Hitz B.C."/>
            <person name="Karra K."/>
            <person name="Nash R.S."/>
            <person name="Weng S."/>
            <person name="Wong E.D."/>
            <person name="Lloyd P."/>
            <person name="Skrzypek M.S."/>
            <person name="Miyasato S.R."/>
            <person name="Simison M."/>
            <person name="Cherry J.M."/>
        </authorList>
    </citation>
    <scope>GENOME REANNOTATION</scope>
    <source>
        <strain>ATCC 204508 / S288c</strain>
    </source>
</reference>
<reference key="3">
    <citation type="journal article" date="2007" name="Genome Res.">
        <title>Approaching a complete repository of sequence-verified protein-encoding clones for Saccharomyces cerevisiae.</title>
        <authorList>
            <person name="Hu Y."/>
            <person name="Rolfs A."/>
            <person name="Bhullar B."/>
            <person name="Murthy T.V.S."/>
            <person name="Zhu C."/>
            <person name="Berger M.F."/>
            <person name="Camargo A.A."/>
            <person name="Kelley F."/>
            <person name="McCarron S."/>
            <person name="Jepson D."/>
            <person name="Richardson A."/>
            <person name="Raphael J."/>
            <person name="Moreira D."/>
            <person name="Taycher E."/>
            <person name="Zuo D."/>
            <person name="Mohr S."/>
            <person name="Kane M.F."/>
            <person name="Williamson J."/>
            <person name="Simpson A.J.G."/>
            <person name="Bulyk M.L."/>
            <person name="Harlow E."/>
            <person name="Marsischky G."/>
            <person name="Kolodner R.D."/>
            <person name="LaBaer J."/>
        </authorList>
    </citation>
    <scope>NUCLEOTIDE SEQUENCE [GENOMIC DNA]</scope>
    <source>
        <strain>ATCC 204508 / S288c</strain>
    </source>
</reference>
<proteinExistence type="uncertain"/>
<dbReference type="EMBL" id="AY693324">
    <property type="protein sequence ID" value="AAT93343.1"/>
    <property type="molecule type" value="Genomic_DNA"/>
</dbReference>
<dbReference type="EMBL" id="Z73554">
    <property type="protein sequence ID" value="CAA97912.1"/>
    <property type="molecule type" value="Genomic_DNA"/>
</dbReference>
<dbReference type="PIR" id="S65216">
    <property type="entry name" value="S65216"/>
</dbReference>
<dbReference type="STRING" id="4932.YPL197C"/>
<dbReference type="PaxDb" id="4932-YPL197C"/>
<dbReference type="EnsemblFungi" id="YPL197C_mRNA">
    <property type="protein sequence ID" value="YPL197C"/>
    <property type="gene ID" value="YPL197C"/>
</dbReference>
<dbReference type="AGR" id="SGD:S000006118"/>
<dbReference type="SGD" id="S000006118">
    <property type="gene designation" value="YPL197C"/>
</dbReference>
<dbReference type="eggNOG" id="ENOG502SFM4">
    <property type="taxonomic scope" value="Eukaryota"/>
</dbReference>
<dbReference type="HOGENOM" id="CLU_2050983_0_0_1"/>
<dbReference type="OMA" id="XDEMLEL"/>
<gene>
    <name type="ordered locus">YPL197C</name>
    <name type="ORF">P1895</name>
</gene>
<organism>
    <name type="scientific">Saccharomyces cerevisiae (strain ATCC 204508 / S288c)</name>
    <name type="common">Baker's yeast</name>
    <dbReference type="NCBI Taxonomy" id="559292"/>
    <lineage>
        <taxon>Eukaryota</taxon>
        <taxon>Fungi</taxon>
        <taxon>Dikarya</taxon>
        <taxon>Ascomycota</taxon>
        <taxon>Saccharomycotina</taxon>
        <taxon>Saccharomycetes</taxon>
        <taxon>Saccharomycetales</taxon>
        <taxon>Saccharomycetaceae</taxon>
        <taxon>Saccharomyces</taxon>
    </lineage>
</organism>